<feature type="chain" id="PRO_0000452937" description="Non-canonical nonribosomal peptide synthetase hkm10">
    <location>
        <begin position="1"/>
        <end position="1020"/>
    </location>
</feature>
<feature type="domain" description="Carrier" evidence="2 6">
    <location>
        <begin position="526"/>
        <end position="608"/>
    </location>
</feature>
<feature type="region of interest" description="Adenylation (A) domain" evidence="1 6">
    <location>
        <begin position="21"/>
        <end position="419"/>
    </location>
</feature>
<feature type="region of interest" description="short-chain dehydrogenase/reductase (R) domain" evidence="1 6">
    <location>
        <begin position="652"/>
        <end position="894"/>
    </location>
</feature>
<feature type="modified residue" description="O-(pantetheine 4'-phosphoryl)serine" evidence="2">
    <location>
        <position position="568"/>
    </location>
</feature>
<proteinExistence type="evidence at protein level"/>
<name>HKM10_ASPHA</name>
<organism>
    <name type="scientific">Aspergillus hancockii</name>
    <dbReference type="NCBI Taxonomy" id="1873369"/>
    <lineage>
        <taxon>Eukaryota</taxon>
        <taxon>Fungi</taxon>
        <taxon>Dikarya</taxon>
        <taxon>Ascomycota</taxon>
        <taxon>Pezizomycotina</taxon>
        <taxon>Eurotiomycetes</taxon>
        <taxon>Eurotiomycetidae</taxon>
        <taxon>Eurotiales</taxon>
        <taxon>Aspergillaceae</taxon>
        <taxon>Aspergillus</taxon>
        <taxon>Aspergillus subgen. Circumdati</taxon>
    </lineage>
</organism>
<keyword id="KW-0436">Ligase</keyword>
<keyword id="KW-0511">Multifunctional enzyme</keyword>
<keyword id="KW-0560">Oxidoreductase</keyword>
<keyword id="KW-0596">Phosphopantetheine</keyword>
<keyword id="KW-0597">Phosphoprotein</keyword>
<comment type="function">
    <text evidence="3 6">Non-canonical nonribosomal peptide synthetase; part of the gene cluster that mediates the biosynthesis of hancockiamides, an unusual new family of N-cinnamoylated piperazines (PubMed:33242032). The NRPS hkm10 and the NmrA-like reductase hkm9 are proposed to convert two molecules of L-Phe to the intermediary piperazine called xenocockiamide A (Probable). Xenocockiamide A is then converted to hancockiamide D via a series of hydroxylations and O-methylations (Probable). The tyrosinase hkm6 may catalyze an aromatic hydroxylation, then the 2-oxoglutarate-dependent Fe(II) dioxygenase hkm4 and the FAD-dependent phenol hydroxylase hkm7 may catalyze consecutive hydroxylations to install 2 more hydroxy groups, and the methyltransferase hkm8 probably catalyzes two methylations using 2 molecules of S-adenosyl-L-methionine (SAM) (Probable). The NRPS hkm11 activates and transfers trans-cinnamate supplied by the PAL hkm12 to hancockiamide D and produces hancockiamide A (PubMed:33242032). NRPS Hkm11 has the flexibility to tolerate the bulky hancockiamide G as a substrate and the absence of the acetyl-transferase hkm3 opens up the opportunity for hkm11 to introduce a second N-cinnamoyl moiety (PubMed:33242032). The cytochrome P450 monooxygenase hkm5 catalyzes the methylenedioxy bridge formation, converting hancockiamide A into hancockiamide G (PubMed:33242032). Hkm5 can also convert hancockiamide B into hancockiamide C, and hancockiamide D into hancockiamide H (PubMed:33242032). The N-acetyltransferase hkm3 finally transfers an acetyl group to 1-N of piperazine, converting hancockiamide A into hancockiamide B and hancockiamide G into hancockiamide C (PubMed:33242032).</text>
</comment>
<comment type="pathway">
    <text evidence="6">Secondary metabolite biosynthesis.</text>
</comment>
<comment type="domain">
    <text evidence="6">NRP synthetases are composed of discrete domains (adenylation (A), thiolation (T) or peptidyl carrier protein (PCP) and condensation (C) domains) which when grouped together are referred to as a single module. Each module is responsible for the recognition (via the A domain) and incorporation of a single amino acid into the growing peptide product. Thus, an NRP synthetase is generally composed of one or more modules and can terminate in a thioesterase domain (TE) that releases the newly synthesized peptide from the enzyme. Occasionally, epimerase (E) domains (responsible for L- to D-amino acid conversion) are present within the NRP synthetase. Hkm10 contains an amino acid adenylation domain (A), a peptidyl carrier protein (PCP) domain with a phosphopantetheine prosthetic group, and a short-chain dehydrogenase/reductase terminus (R), but it does not have an identifiable condensation (C) domain required for the formation of peptide bonds during non-ribosomal peptide synthesis.</text>
</comment>
<comment type="biotechnology">
    <text evidence="3">Hancockiamide D displays potent cytotoxic activity against murine myeloma NS-1 cells, suggesting a potential antitumour application (PubMed:33242032). More interestingly, hancockiamide C, the likely end metabolite of the hkm pathway, shows potent Arabidopsis thaliana seed anti-germination activity, but is inactive against the monocot Eragrostis tef seed, suggesting that it could be a herbicidal lead targeting monocots (PubMed:33242032). The herbicidal activity of hancockiamide C could be due to its phenylpropanoid-like structural features, which may act on the plant lignan pathways, and hence warrants further investigations (PubMed:33242032).</text>
</comment>
<comment type="similarity">
    <text evidence="5">Belongs to the NRP synthetase family.</text>
</comment>
<dbReference type="EC" id="6.3.2.-" evidence="6"/>
<dbReference type="EMBL" id="MBFL02000005">
    <property type="protein sequence ID" value="KAF7597140.1"/>
    <property type="molecule type" value="Genomic_DNA"/>
</dbReference>
<dbReference type="SMR" id="P0DUL8"/>
<dbReference type="OrthoDB" id="408177at2759"/>
<dbReference type="GO" id="GO:0016874">
    <property type="term" value="F:ligase activity"/>
    <property type="evidence" value="ECO:0007669"/>
    <property type="project" value="UniProtKB-KW"/>
</dbReference>
<dbReference type="GO" id="GO:0016491">
    <property type="term" value="F:oxidoreductase activity"/>
    <property type="evidence" value="ECO:0007669"/>
    <property type="project" value="UniProtKB-KW"/>
</dbReference>
<dbReference type="CDD" id="cd05930">
    <property type="entry name" value="A_NRPS"/>
    <property type="match status" value="1"/>
</dbReference>
<dbReference type="CDD" id="cd05235">
    <property type="entry name" value="SDR_e1"/>
    <property type="match status" value="1"/>
</dbReference>
<dbReference type="Gene3D" id="3.30.300.30">
    <property type="match status" value="1"/>
</dbReference>
<dbReference type="Gene3D" id="1.10.1200.10">
    <property type="entry name" value="ACP-like"/>
    <property type="match status" value="1"/>
</dbReference>
<dbReference type="Gene3D" id="3.40.50.12780">
    <property type="entry name" value="N-terminal domain of ligase-like"/>
    <property type="match status" value="1"/>
</dbReference>
<dbReference type="Gene3D" id="3.40.50.720">
    <property type="entry name" value="NAD(P)-binding Rossmann-like Domain"/>
    <property type="match status" value="1"/>
</dbReference>
<dbReference type="InterPro" id="IPR036736">
    <property type="entry name" value="ACP-like_sf"/>
</dbReference>
<dbReference type="InterPro" id="IPR045851">
    <property type="entry name" value="AMP-bd_C_sf"/>
</dbReference>
<dbReference type="InterPro" id="IPR020845">
    <property type="entry name" value="AMP-binding_CS"/>
</dbReference>
<dbReference type="InterPro" id="IPR000873">
    <property type="entry name" value="AMP-dep_synth/lig_dom"/>
</dbReference>
<dbReference type="InterPro" id="IPR042099">
    <property type="entry name" value="ANL_N_sf"/>
</dbReference>
<dbReference type="InterPro" id="IPR013120">
    <property type="entry name" value="Far_NAD-bd"/>
</dbReference>
<dbReference type="InterPro" id="IPR036291">
    <property type="entry name" value="NAD(P)-bd_dom_sf"/>
</dbReference>
<dbReference type="InterPro" id="IPR009081">
    <property type="entry name" value="PP-bd_ACP"/>
</dbReference>
<dbReference type="InterPro" id="IPR010080">
    <property type="entry name" value="Thioester_reductase-like_dom"/>
</dbReference>
<dbReference type="NCBIfam" id="TIGR01746">
    <property type="entry name" value="Thioester-redct"/>
    <property type="match status" value="1"/>
</dbReference>
<dbReference type="PANTHER" id="PTHR44845:SF6">
    <property type="entry name" value="BETA-ALANINE-ACTIVATING ENZYME"/>
    <property type="match status" value="1"/>
</dbReference>
<dbReference type="PANTHER" id="PTHR44845">
    <property type="entry name" value="CARRIER DOMAIN-CONTAINING PROTEIN"/>
    <property type="match status" value="1"/>
</dbReference>
<dbReference type="Pfam" id="PF00501">
    <property type="entry name" value="AMP-binding"/>
    <property type="match status" value="1"/>
</dbReference>
<dbReference type="Pfam" id="PF07993">
    <property type="entry name" value="NAD_binding_4"/>
    <property type="match status" value="1"/>
</dbReference>
<dbReference type="Pfam" id="PF00550">
    <property type="entry name" value="PP-binding"/>
    <property type="match status" value="1"/>
</dbReference>
<dbReference type="SUPFAM" id="SSF56801">
    <property type="entry name" value="Acetyl-CoA synthetase-like"/>
    <property type="match status" value="1"/>
</dbReference>
<dbReference type="SUPFAM" id="SSF47336">
    <property type="entry name" value="ACP-like"/>
    <property type="match status" value="1"/>
</dbReference>
<dbReference type="SUPFAM" id="SSF51735">
    <property type="entry name" value="NAD(P)-binding Rossmann-fold domains"/>
    <property type="match status" value="1"/>
</dbReference>
<dbReference type="PROSITE" id="PS00455">
    <property type="entry name" value="AMP_BINDING"/>
    <property type="match status" value="1"/>
</dbReference>
<dbReference type="PROSITE" id="PS50075">
    <property type="entry name" value="CARRIER"/>
    <property type="match status" value="1"/>
</dbReference>
<evidence type="ECO:0000255" key="1"/>
<evidence type="ECO:0000255" key="2">
    <source>
        <dbReference type="PROSITE-ProRule" id="PRU00258"/>
    </source>
</evidence>
<evidence type="ECO:0000269" key="3">
    <source>
    </source>
</evidence>
<evidence type="ECO:0000303" key="4">
    <source>
    </source>
</evidence>
<evidence type="ECO:0000305" key="5"/>
<evidence type="ECO:0000305" key="6">
    <source>
    </source>
</evidence>
<reference key="1">
    <citation type="submission" date="2019-04" db="EMBL/GenBank/DDBJ databases">
        <authorList>
            <person name="Gilchrist C.L.M."/>
            <person name="Chooi Y.H."/>
        </authorList>
    </citation>
    <scope>NUCLEOTIDE SEQUENCE [LARGE SCALE GENOMIC DNA]</scope>
    <source>
        <strain>FRR 3425 / CBS 142004 / DTO 360-G7</strain>
    </source>
</reference>
<reference key="2">
    <citation type="journal article" date="2021" name="Org. Biomol. Chem.">
        <title>Hancockiamides: phenylpropanoid piperazines from Aspergillus hancockii are biosynthesised by a versatile dual single-module NRPS pathway.</title>
        <authorList>
            <person name="Li H."/>
            <person name="Lacey A.E."/>
            <person name="Shu S."/>
            <person name="Kalaitzis J.A."/>
            <person name="Vuong D."/>
            <person name="Crombie A."/>
            <person name="Hu J."/>
            <person name="Gilchrist C.L.M."/>
            <person name="Lacey E."/>
            <person name="Piggott A.M."/>
            <person name="Chooi Y.H."/>
        </authorList>
    </citation>
    <scope>FUNCTION</scope>
    <scope>PATHWAY</scope>
    <scope>BIOTECHNOLOGY</scope>
</reference>
<sequence>MSTFESLLARNEGLGQLFYQQMLEDPDAIAIVDGDYSLTYASLHAQATHLAQRLDQNDFVHEEPVGIVVQHGILDAVAQVAIIYAGGTCVTLDPALPNQQIERRLNRLRARYILVDTPNKSRGLPFSQIEVEDLPISTELIPTDSPYPVNLSLEHRSHLIHTSGTTSESKAVQIVGRSIVHVANYAPFEPVVKTDVVAHGNSTSFDVALFDIWAPLVQGASIAVLSKATLLDLSAFEAAIDRYKISVMAITAPLVNLAATTRPGMFSSMRVVLMGGEAVNIPAMRKIFEAGPPVHMVNAYGPTECCVYCLARKITLEDLDTGAVSIGKAIGNNIATVCDEMGKPVPDGEEGELLVGGPGVSPGYVNLPGKNAASFIEVPDLVDANGTPYHMYRTGDLVKRRPDGQYDFVGRFDHQVKIRGYRVELGAIETVLMDTGYFSEGVVMKVDSKAEGAGSALVAFAVLAPTAPPSAVTDATAALTAALPHYMIPNIHIVESIPLTNHAKVDRKQLADWCLQRQEKNMCAMQDKVPSEGASTRDQLGALWATILATPVREYSDNDDFFGLGGTSLQASLLISLIRRTFNTEVSLLALYDNSTLGQLAHIVDRNQGGALATVQNLREMWIADTMIGDALETPVGPVVDWRRDTEGRVFLTGATGFVGAFLLSDMLKMPGIHQVGCLVRAPDEATGVRRLRHALEKYNLWREEYLPKLLPLCGKLEDPWLGLGEQRFREIADWASVIFHLGALVNYTQPYSWHRPANIEGTVNVVRLACTGRSKALHYCSSISCFGPTGIINGTKVVHEDGALMPHLNALPYDHGYAQSQWVAEELLRRLIHRRFPIAVYRPGFITGHSETGACNPDDFFSRLIRACSSIGCYPGLPNQRKEFVPIDYVTSTMIHIASSSLSLGHAFHIVPPTREESPEMNDTMSLIGELTGTSIQPVSYREWIEQLSSTKDLSLQPLLPMLAEVVIDGMTRWEMYENMPTYENTNTLRALASCPDLPKFPMVDEALLRKYLDYLADH</sequence>
<accession>P0DUL8</accession>
<protein>
    <recommendedName>
        <fullName evidence="4">Non-canonical nonribosomal peptide synthetase hkm10</fullName>
        <ecNumber evidence="6">6.3.2.-</ecNumber>
    </recommendedName>
    <alternativeName>
        <fullName evidence="4">Hancockiamides biosynthesis cluster protein 10</fullName>
    </alternativeName>
</protein>